<protein>
    <recommendedName>
        <fullName>Cytochrome c oxidase assembly factor 3, mitochondrial</fullName>
    </recommendedName>
    <alternativeName>
        <fullName>Cytochrome c oxidase protein 25</fullName>
    </alternativeName>
    <alternativeName>
        <fullName>Required for respiratory growth protein 10</fullName>
    </alternativeName>
</protein>
<feature type="chain" id="PRO_0000245412" description="Cytochrome c oxidase assembly factor 3, mitochondrial">
    <location>
        <begin position="1"/>
        <end position="85"/>
    </location>
</feature>
<feature type="topological domain" description="Mitochondrial matrix">
    <location>
        <begin position="1"/>
        <end position="26"/>
    </location>
</feature>
<feature type="transmembrane region" description="Helical" evidence="1">
    <location>
        <begin position="27"/>
        <end position="49"/>
    </location>
</feature>
<feature type="topological domain" description="Mitochondrial intermembrane">
    <location>
        <begin position="50"/>
        <end position="85"/>
    </location>
</feature>
<reference key="1">
    <citation type="journal article" date="1996" name="EMBO J.">
        <title>Complete nucleotide sequence of Saccharomyces cerevisiae chromosome X.</title>
        <authorList>
            <person name="Galibert F."/>
            <person name="Alexandraki D."/>
            <person name="Baur A."/>
            <person name="Boles E."/>
            <person name="Chalwatzis N."/>
            <person name="Chuat J.-C."/>
            <person name="Coster F."/>
            <person name="Cziepluch C."/>
            <person name="de Haan M."/>
            <person name="Domdey H."/>
            <person name="Durand P."/>
            <person name="Entian K.-D."/>
            <person name="Gatius M."/>
            <person name="Goffeau A."/>
            <person name="Grivell L.A."/>
            <person name="Hennemann A."/>
            <person name="Herbert C.J."/>
            <person name="Heumann K."/>
            <person name="Hilger F."/>
            <person name="Hollenberg C.P."/>
            <person name="Huang M.-E."/>
            <person name="Jacq C."/>
            <person name="Jauniaux J.-C."/>
            <person name="Katsoulou C."/>
            <person name="Kirchrath L."/>
            <person name="Kleine K."/>
            <person name="Kordes E."/>
            <person name="Koetter P."/>
            <person name="Liebl S."/>
            <person name="Louis E.J."/>
            <person name="Manus V."/>
            <person name="Mewes H.-W."/>
            <person name="Miosga T."/>
            <person name="Obermaier B."/>
            <person name="Perea J."/>
            <person name="Pohl T.M."/>
            <person name="Portetelle D."/>
            <person name="Pujol A."/>
            <person name="Purnelle B."/>
            <person name="Ramezani Rad M."/>
            <person name="Rasmussen S.W."/>
            <person name="Rose M."/>
            <person name="Rossau R."/>
            <person name="Schaaff-Gerstenschlaeger I."/>
            <person name="Smits P.H.M."/>
            <person name="Scarcez T."/>
            <person name="Soriano N."/>
            <person name="To Van D."/>
            <person name="Tzermia M."/>
            <person name="Van Broekhoven A."/>
            <person name="Vandenbol M."/>
            <person name="Wedler H."/>
            <person name="von Wettstein D."/>
            <person name="Wambutt R."/>
            <person name="Zagulski M."/>
            <person name="Zollner A."/>
            <person name="Karpfinger-Hartl L."/>
        </authorList>
    </citation>
    <scope>NUCLEOTIDE SEQUENCE [LARGE SCALE GENOMIC DNA]</scope>
    <source>
        <strain>ATCC 204508 / S288c</strain>
    </source>
</reference>
<reference key="2">
    <citation type="journal article" date="2014" name="G3 (Bethesda)">
        <title>The reference genome sequence of Saccharomyces cerevisiae: Then and now.</title>
        <authorList>
            <person name="Engel S.R."/>
            <person name="Dietrich F.S."/>
            <person name="Fisk D.G."/>
            <person name="Binkley G."/>
            <person name="Balakrishnan R."/>
            <person name="Costanzo M.C."/>
            <person name="Dwight S.S."/>
            <person name="Hitz B.C."/>
            <person name="Karra K."/>
            <person name="Nash R.S."/>
            <person name="Weng S."/>
            <person name="Wong E.D."/>
            <person name="Lloyd P."/>
            <person name="Skrzypek M.S."/>
            <person name="Miyasato S.R."/>
            <person name="Simison M."/>
            <person name="Cherry J.M."/>
        </authorList>
    </citation>
    <scope>GENOME REANNOTATION</scope>
    <source>
        <strain>ATCC 204508 / S288c</strain>
    </source>
</reference>
<reference key="3">
    <citation type="journal article" date="2000" name="FEBS Lett.">
        <title>Genomic exploration of the hemiascomycetous yeasts: 4. The genome of Saccharomyces cerevisiae revisited.</title>
        <authorList>
            <person name="Blandin G."/>
            <person name="Durrens P."/>
            <person name="Tekaia F."/>
            <person name="Aigle M."/>
            <person name="Bolotin-Fukuhara M."/>
            <person name="Bon E."/>
            <person name="Casaregola S."/>
            <person name="de Montigny J."/>
            <person name="Gaillardin C."/>
            <person name="Lepingle A."/>
            <person name="Llorente B."/>
            <person name="Malpertuy A."/>
            <person name="Neuveglise C."/>
            <person name="Ozier-Kalogeropoulos O."/>
            <person name="Perrin A."/>
            <person name="Potier S."/>
            <person name="Souciet J.-L."/>
            <person name="Talla E."/>
            <person name="Toffano-Nioche C."/>
            <person name="Wesolowski-Louvel M."/>
            <person name="Marck C."/>
            <person name="Dujon B."/>
        </authorList>
    </citation>
    <scope>GENOME REANNOTATION</scope>
</reference>
<reference key="4">
    <citation type="journal article" date="2003" name="Nature">
        <title>Global analysis of protein localization in budding yeast.</title>
        <authorList>
            <person name="Huh W.-K."/>
            <person name="Falvo J.V."/>
            <person name="Gerke L.C."/>
            <person name="Carroll A.S."/>
            <person name="Howson R.W."/>
            <person name="Weissman J.S."/>
            <person name="O'Shea E.K."/>
        </authorList>
    </citation>
    <scope>SUBCELLULAR LOCATION [LARGE SCALE ANALYSIS]</scope>
</reference>
<reference key="5">
    <citation type="journal article" date="2003" name="Nature">
        <title>Global analysis of protein expression in yeast.</title>
        <authorList>
            <person name="Ghaemmaghami S."/>
            <person name="Huh W.-K."/>
            <person name="Bower K."/>
            <person name="Howson R.W."/>
            <person name="Belle A."/>
            <person name="Dephoure N."/>
            <person name="O'Shea E.K."/>
            <person name="Weissman J.S."/>
        </authorList>
    </citation>
    <scope>LEVEL OF PROTEIN EXPRESSION [LARGE SCALE ANALYSIS]</scope>
</reference>
<reference key="6">
    <citation type="journal article" date="2006" name="Genome Res.">
        <title>Functional genomics of genes with small open reading frames (sORFs) in S. cerevisiae.</title>
        <authorList>
            <person name="Kastenmayer J.P."/>
            <person name="Ni L."/>
            <person name="Chu A."/>
            <person name="Kitchen L.E."/>
            <person name="Au W.-C."/>
            <person name="Yang H."/>
            <person name="Carter C.D."/>
            <person name="Wheeler D."/>
            <person name="Davis R.W."/>
            <person name="Boeke J.D."/>
            <person name="Snyder M.A."/>
            <person name="Basrai M.A."/>
        </authorList>
    </citation>
    <scope>FUNCTION</scope>
</reference>
<reference key="7">
    <citation type="journal article" date="2006" name="J. Proteome Res.">
        <title>Toward the complete yeast mitochondrial proteome: multidimensional separation techniques for mitochondrial proteomics.</title>
        <authorList>
            <person name="Reinders J."/>
            <person name="Zahedi R.P."/>
            <person name="Pfanner N."/>
            <person name="Meisinger C."/>
            <person name="Sickmann A."/>
        </authorList>
    </citation>
    <scope>SUBCELLULAR LOCATION [LARGE SCALE ANALYSIS]</scope>
    <scope>IDENTIFICATION BY MASS SPECTROMETRY</scope>
</reference>
<reference key="8">
    <citation type="journal article" date="2009" name="Genome Biol.">
        <title>Genome-wide deletion mutant analysis reveals genes required for respiratory growth, mitochondrial genome maintenance and mitochondrial protein synthesis in Saccharomyces cerevisiae.</title>
        <authorList>
            <person name="Merz S."/>
            <person name="Westermann B."/>
        </authorList>
    </citation>
    <scope>FUNCTION</scope>
</reference>
<reference key="9">
    <citation type="journal article" date="2010" name="J. Cell Biol.">
        <title>Coa3 and Cox14 are essential for negative feedback regulation of COX1 translation in mitochondria.</title>
        <authorList>
            <person name="Mick D.U."/>
            <person name="Vukotic M."/>
            <person name="Piechura H."/>
            <person name="Meyer H.E."/>
            <person name="Warscheid B."/>
            <person name="Deckers M."/>
            <person name="Rehling P."/>
        </authorList>
    </citation>
    <scope>IDENTIFICATION IN COA COMPLEXES</scope>
    <scope>IDENTIFICATION BY MASS SPECTROMETRY</scope>
    <scope>INTERACTION WITH SHY1; COX1 AND MSS51</scope>
    <scope>SUBCELLULAR LOCATION</scope>
    <scope>TOPOLOGY</scope>
    <scope>FUNCTION</scope>
</reference>
<reference key="10">
    <citation type="journal article" date="2011" name="J. Biol. Chem.">
        <title>Cox25 teams up with Mss51, Ssc1, and Cox14 to regulate mitochondrial cytochrome c oxidase subunit 1 expression and assembly in Saccharomyces cerevisiae.</title>
        <authorList>
            <person name="Fontanesi F."/>
            <person name="Clemente P."/>
            <person name="Barrientos A."/>
        </authorList>
    </citation>
    <scope>IDENTIFICATION IN COA COMPLEXES</scope>
    <scope>IDENTIFICATION BY MASS SPECTROMETRY</scope>
    <scope>INTERACTION WITH COX1</scope>
    <scope>SUBCELLULAR LOCATION</scope>
    <scope>TOPOLOGY</scope>
    <scope>FUNCTION</scope>
</reference>
<reference key="11">
    <citation type="journal article" date="2012" name="Proc. Natl. Acad. Sci. U.S.A.">
        <title>N-terminal acetylome analyses and functional insights of the N-terminal acetyltransferase NatB.</title>
        <authorList>
            <person name="Van Damme P."/>
            <person name="Lasa M."/>
            <person name="Polevoda B."/>
            <person name="Gazquez C."/>
            <person name="Elosegui-Artola A."/>
            <person name="Kim D.S."/>
            <person name="De Juan-Pardo E."/>
            <person name="Demeyer K."/>
            <person name="Hole K."/>
            <person name="Larrea E."/>
            <person name="Timmerman E."/>
            <person name="Prieto J."/>
            <person name="Arnesen T."/>
            <person name="Sherman F."/>
            <person name="Gevaert K."/>
            <person name="Aldabe R."/>
        </authorList>
    </citation>
    <scope>IDENTIFICATION BY MASS SPECTROMETRY [LARGE SCALE ANALYSIS]</scope>
</reference>
<evidence type="ECO:0000255" key="1"/>
<evidence type="ECO:0000269" key="2">
    <source>
    </source>
</evidence>
<evidence type="ECO:0000269" key="3">
    <source>
    </source>
</evidence>
<evidence type="ECO:0000269" key="4">
    <source>
    </source>
</evidence>
<evidence type="ECO:0000269" key="5">
    <source>
    </source>
</evidence>
<evidence type="ECO:0000269" key="6">
    <source>
    </source>
</evidence>
<evidence type="ECO:0000269" key="7">
    <source>
    </source>
</evidence>
<evidence type="ECO:0000269" key="8">
    <source>
    </source>
</evidence>
<evidence type="ECO:0000305" key="9"/>
<gene>
    <name type="primary">COA3</name>
    <name type="synonym">COX25</name>
    <name type="synonym">RRG10</name>
    <name type="ordered locus">YJL062W-A</name>
</gene>
<comment type="function">
    <text evidence="4 6 7 8">Required for assembly of cytochrome c oxidase (complex IV). With COX14, negatively regulates COX1 translation and is involved in MSS51 association with newly synthesized COX1.</text>
</comment>
<comment type="subunit">
    <text evidence="7 8">Component of 250-400 kDa complexes called cytochrome oxidase assembly intermediates or COA complexes composed at least COA3, COX14, COX5A, SHY1 and SSC1. Interacts with COX1 and MSS51.</text>
</comment>
<comment type="interaction">
    <interactant intactId="EBI-3680840">
        <id>Q3E7B2</id>
    </interactant>
    <interactant intactId="EBI-11318">
        <id>P32335</id>
        <label>MSS51</label>
    </interactant>
    <organismsDiffer>false</organismsDiffer>
    <experiments>4</experiments>
</comment>
<comment type="subcellular location">
    <subcellularLocation>
        <location evidence="2 5 7 8">Mitochondrion inner membrane</location>
        <topology evidence="2 5 7 8">Single-pass membrane protein</topology>
    </subcellularLocation>
</comment>
<comment type="miscellaneous">
    <text evidence="3">Present with 2530 molecules/cell in log phase SD medium.</text>
</comment>
<comment type="similarity">
    <text evidence="9">Belongs to the COA3 family.</text>
</comment>
<organism>
    <name type="scientific">Saccharomyces cerevisiae (strain ATCC 204508 / S288c)</name>
    <name type="common">Baker's yeast</name>
    <dbReference type="NCBI Taxonomy" id="559292"/>
    <lineage>
        <taxon>Eukaryota</taxon>
        <taxon>Fungi</taxon>
        <taxon>Dikarya</taxon>
        <taxon>Ascomycota</taxon>
        <taxon>Saccharomycotina</taxon>
        <taxon>Saccharomycetes</taxon>
        <taxon>Saccharomycetales</taxon>
        <taxon>Saccharomycetaceae</taxon>
        <taxon>Saccharomyces</taxon>
    </lineage>
</organism>
<keyword id="KW-0472">Membrane</keyword>
<keyword id="KW-0496">Mitochondrion</keyword>
<keyword id="KW-0999">Mitochondrion inner membrane</keyword>
<keyword id="KW-1185">Reference proteome</keyword>
<keyword id="KW-0812">Transmembrane</keyword>
<keyword id="KW-1133">Transmembrane helix</keyword>
<dbReference type="EMBL" id="Z49338">
    <property type="status" value="NOT_ANNOTATED_CDS"/>
    <property type="molecule type" value="Genomic_DNA"/>
</dbReference>
<dbReference type="EMBL" id="BK006943">
    <property type="protein sequence ID" value="DAA08735.1"/>
    <property type="molecule type" value="Genomic_DNA"/>
</dbReference>
<dbReference type="RefSeq" id="NP_076894.3">
    <property type="nucleotide sequence ID" value="NM_001184477.3"/>
</dbReference>
<dbReference type="SMR" id="Q3E7B2"/>
<dbReference type="BioGRID" id="33691">
    <property type="interactions" value="209"/>
</dbReference>
<dbReference type="ComplexPortal" id="CPX-1423">
    <property type="entry name" value="COX1 pre-assembly complex"/>
</dbReference>
<dbReference type="FunCoup" id="Q3E7B2">
    <property type="interactions" value="42"/>
</dbReference>
<dbReference type="IntAct" id="Q3E7B2">
    <property type="interactions" value="8"/>
</dbReference>
<dbReference type="MINT" id="Q3E7B2"/>
<dbReference type="STRING" id="4932.YJL062W-A"/>
<dbReference type="PaxDb" id="4932-YJL062W-A"/>
<dbReference type="PeptideAtlas" id="Q3E7B2"/>
<dbReference type="EnsemblFungi" id="YJL062W-A_mRNA">
    <property type="protein sequence ID" value="YJL062W-A"/>
    <property type="gene ID" value="YJL062W-A"/>
</dbReference>
<dbReference type="GeneID" id="853383"/>
<dbReference type="KEGG" id="sce:YJL062W-A"/>
<dbReference type="AGR" id="SGD:S000007611"/>
<dbReference type="SGD" id="S000007611">
    <property type="gene designation" value="COA3"/>
</dbReference>
<dbReference type="VEuPathDB" id="FungiDB:YJL062W-A"/>
<dbReference type="eggNOG" id="ENOG502S440">
    <property type="taxonomic scope" value="Eukaryota"/>
</dbReference>
<dbReference type="HOGENOM" id="CLU_153999_0_0_1"/>
<dbReference type="InParanoid" id="Q3E7B2"/>
<dbReference type="OMA" id="WKMTPAM"/>
<dbReference type="OrthoDB" id="10018333at2759"/>
<dbReference type="BioCyc" id="YEAST:G3O-31802-MONOMER"/>
<dbReference type="BioGRID-ORCS" id="853383">
    <property type="hits" value="5 hits in 10 CRISPR screens"/>
</dbReference>
<dbReference type="PRO" id="PR:Q3E7B2"/>
<dbReference type="Proteomes" id="UP000002311">
    <property type="component" value="Chromosome X"/>
</dbReference>
<dbReference type="RNAct" id="Q3E7B2">
    <property type="molecule type" value="protein"/>
</dbReference>
<dbReference type="GO" id="GO:0005743">
    <property type="term" value="C:mitochondrial inner membrane"/>
    <property type="evidence" value="ECO:0000314"/>
    <property type="project" value="SGD"/>
</dbReference>
<dbReference type="GO" id="GO:0005739">
    <property type="term" value="C:mitochondrion"/>
    <property type="evidence" value="ECO:0007005"/>
    <property type="project" value="SGD"/>
</dbReference>
<dbReference type="GO" id="GO:0033617">
    <property type="term" value="P:mitochondrial cytochrome c oxidase assembly"/>
    <property type="evidence" value="ECO:0000315"/>
    <property type="project" value="SGD"/>
</dbReference>
<dbReference type="GO" id="GO:0070130">
    <property type="term" value="P:negative regulation of mitochondrial translation"/>
    <property type="evidence" value="ECO:0000315"/>
    <property type="project" value="SGD"/>
</dbReference>
<dbReference type="GO" id="GO:0050821">
    <property type="term" value="P:protein stabilization"/>
    <property type="evidence" value="ECO:0000303"/>
    <property type="project" value="ComplexPortal"/>
</dbReference>
<dbReference type="InterPro" id="IPR041752">
    <property type="entry name" value="Coa3"/>
</dbReference>
<dbReference type="PANTHER" id="PTHR15642:SF3">
    <property type="entry name" value="CYTOCHROME C OXIDASE ASSEMBLY FACTOR 3 HOMOLOG, MITOCHONDRIAL"/>
    <property type="match status" value="1"/>
</dbReference>
<dbReference type="PANTHER" id="PTHR15642">
    <property type="entry name" value="CYTOCHROME C OXIDASE ASSEMBLY FACTOR 3, MITOCHONDRIAL"/>
    <property type="match status" value="1"/>
</dbReference>
<accession>Q3E7B2</accession>
<accession>D6VWB9</accession>
<proteinExistence type="evidence at protein level"/>
<name>COA3_YEAST</name>
<sequence length="85" mass="9882">MVLNPSKYQDTRTWKMTPAMIRARKPFFKGNMLGLTLLLGVTGSVYYYTYHFLHKDNDFADVPIPPIDPQELEALKKEYEAKKKA</sequence>